<feature type="chain" id="PRO_0000226404" description="Small ribosomal subunit protein uS12">
    <location>
        <begin position="1"/>
        <end position="123"/>
    </location>
</feature>
<feature type="region of interest" description="Disordered" evidence="3">
    <location>
        <begin position="100"/>
        <end position="123"/>
    </location>
</feature>
<feature type="compositionally biased region" description="Basic residues" evidence="3">
    <location>
        <begin position="111"/>
        <end position="123"/>
    </location>
</feature>
<feature type="modified residue" description="3-methylthioaspartic acid" evidence="1">
    <location>
        <position position="89"/>
    </location>
</feature>
<sequence length="123" mass="13753">MATINQLVRQPRKRIVEKSDVPALQNCPQRRGVCTRVYTTTPKKPNSALRKVCRVRLTNGFEVSSYIGGEGHNLQEHSVVLIRGGRVKDLPGVRYHTVRGSLDTSGVKGRNQGRSKYGTKRPK</sequence>
<keyword id="KW-0488">Methylation</keyword>
<keyword id="KW-0687">Ribonucleoprotein</keyword>
<keyword id="KW-0689">Ribosomal protein</keyword>
<keyword id="KW-0694">RNA-binding</keyword>
<keyword id="KW-0699">rRNA-binding</keyword>
<keyword id="KW-0820">tRNA-binding</keyword>
<accession>Q4K528</accession>
<gene>
    <name evidence="2" type="primary">rpsL</name>
    <name type="ordered locus">PFL_5587</name>
</gene>
<protein>
    <recommendedName>
        <fullName evidence="2">Small ribosomal subunit protein uS12</fullName>
    </recommendedName>
    <alternativeName>
        <fullName evidence="4">30S ribosomal protein S12</fullName>
    </alternativeName>
</protein>
<reference key="1">
    <citation type="journal article" date="2005" name="Nat. Biotechnol.">
        <title>Complete genome sequence of the plant commensal Pseudomonas fluorescens Pf-5.</title>
        <authorList>
            <person name="Paulsen I.T."/>
            <person name="Press C.M."/>
            <person name="Ravel J."/>
            <person name="Kobayashi D.Y."/>
            <person name="Myers G.S.A."/>
            <person name="Mavrodi D.V."/>
            <person name="DeBoy R.T."/>
            <person name="Seshadri R."/>
            <person name="Ren Q."/>
            <person name="Madupu R."/>
            <person name="Dodson R.J."/>
            <person name="Durkin A.S."/>
            <person name="Brinkac L.M."/>
            <person name="Daugherty S.C."/>
            <person name="Sullivan S.A."/>
            <person name="Rosovitz M.J."/>
            <person name="Gwinn M.L."/>
            <person name="Zhou L."/>
            <person name="Schneider D.J."/>
            <person name="Cartinhour S.W."/>
            <person name="Nelson W.C."/>
            <person name="Weidman J."/>
            <person name="Watkins K."/>
            <person name="Tran K."/>
            <person name="Khouri H."/>
            <person name="Pierson E.A."/>
            <person name="Pierson L.S. III"/>
            <person name="Thomashow L.S."/>
            <person name="Loper J.E."/>
        </authorList>
    </citation>
    <scope>NUCLEOTIDE SEQUENCE [LARGE SCALE GENOMIC DNA]</scope>
    <source>
        <strain>ATCC BAA-477 / NRRL B-23932 / Pf-5</strain>
    </source>
</reference>
<comment type="function">
    <text evidence="2">With S4 and S5 plays an important role in translational accuracy.</text>
</comment>
<comment type="function">
    <text evidence="2">Interacts with and stabilizes bases of the 16S rRNA that are involved in tRNA selection in the A site and with the mRNA backbone. Located at the interface of the 30S and 50S subunits, it traverses the body of the 30S subunit contacting proteins on the other side and probably holding the rRNA structure together. The combined cluster of proteins S8, S12 and S17 appears to hold together the shoulder and platform of the 30S subunit.</text>
</comment>
<comment type="subunit">
    <text evidence="2">Part of the 30S ribosomal subunit. Contacts proteins S8 and S17. May interact with IF1 in the 30S initiation complex.</text>
</comment>
<comment type="similarity">
    <text evidence="2">Belongs to the universal ribosomal protein uS12 family.</text>
</comment>
<evidence type="ECO:0000250" key="1"/>
<evidence type="ECO:0000255" key="2">
    <source>
        <dbReference type="HAMAP-Rule" id="MF_00403"/>
    </source>
</evidence>
<evidence type="ECO:0000256" key="3">
    <source>
        <dbReference type="SAM" id="MobiDB-lite"/>
    </source>
</evidence>
<evidence type="ECO:0000305" key="4"/>
<name>RS12_PSEF5</name>
<proteinExistence type="inferred from homology"/>
<dbReference type="EMBL" id="CP000076">
    <property type="protein sequence ID" value="AAY94792.1"/>
    <property type="molecule type" value="Genomic_DNA"/>
</dbReference>
<dbReference type="RefSeq" id="WP_003186084.1">
    <property type="nucleotide sequence ID" value="NC_004129.6"/>
</dbReference>
<dbReference type="SMR" id="Q4K528"/>
<dbReference type="STRING" id="220664.PFL_5587"/>
<dbReference type="GeneID" id="98285443"/>
<dbReference type="KEGG" id="pfl:PFL_5587"/>
<dbReference type="eggNOG" id="COG0048">
    <property type="taxonomic scope" value="Bacteria"/>
</dbReference>
<dbReference type="HOGENOM" id="CLU_104295_1_2_6"/>
<dbReference type="Proteomes" id="UP000008540">
    <property type="component" value="Chromosome"/>
</dbReference>
<dbReference type="GO" id="GO:0015935">
    <property type="term" value="C:small ribosomal subunit"/>
    <property type="evidence" value="ECO:0007669"/>
    <property type="project" value="InterPro"/>
</dbReference>
<dbReference type="GO" id="GO:0019843">
    <property type="term" value="F:rRNA binding"/>
    <property type="evidence" value="ECO:0007669"/>
    <property type="project" value="UniProtKB-UniRule"/>
</dbReference>
<dbReference type="GO" id="GO:0003735">
    <property type="term" value="F:structural constituent of ribosome"/>
    <property type="evidence" value="ECO:0007669"/>
    <property type="project" value="InterPro"/>
</dbReference>
<dbReference type="GO" id="GO:0000049">
    <property type="term" value="F:tRNA binding"/>
    <property type="evidence" value="ECO:0007669"/>
    <property type="project" value="UniProtKB-UniRule"/>
</dbReference>
<dbReference type="GO" id="GO:0006412">
    <property type="term" value="P:translation"/>
    <property type="evidence" value="ECO:0007669"/>
    <property type="project" value="UniProtKB-UniRule"/>
</dbReference>
<dbReference type="CDD" id="cd03368">
    <property type="entry name" value="Ribosomal_S12"/>
    <property type="match status" value="1"/>
</dbReference>
<dbReference type="FunFam" id="2.40.50.140:FF:000001">
    <property type="entry name" value="30S ribosomal protein S12"/>
    <property type="match status" value="1"/>
</dbReference>
<dbReference type="Gene3D" id="2.40.50.140">
    <property type="entry name" value="Nucleic acid-binding proteins"/>
    <property type="match status" value="1"/>
</dbReference>
<dbReference type="HAMAP" id="MF_00403_B">
    <property type="entry name" value="Ribosomal_uS12_B"/>
    <property type="match status" value="1"/>
</dbReference>
<dbReference type="InterPro" id="IPR012340">
    <property type="entry name" value="NA-bd_OB-fold"/>
</dbReference>
<dbReference type="InterPro" id="IPR006032">
    <property type="entry name" value="Ribosomal_uS12"/>
</dbReference>
<dbReference type="InterPro" id="IPR005679">
    <property type="entry name" value="Ribosomal_uS12_bac"/>
</dbReference>
<dbReference type="NCBIfam" id="TIGR00981">
    <property type="entry name" value="rpsL_bact"/>
    <property type="match status" value="1"/>
</dbReference>
<dbReference type="PANTHER" id="PTHR11652">
    <property type="entry name" value="30S RIBOSOMAL PROTEIN S12 FAMILY MEMBER"/>
    <property type="match status" value="1"/>
</dbReference>
<dbReference type="Pfam" id="PF00164">
    <property type="entry name" value="Ribosom_S12_S23"/>
    <property type="match status" value="1"/>
</dbReference>
<dbReference type="PIRSF" id="PIRSF002133">
    <property type="entry name" value="Ribosomal_S12/S23"/>
    <property type="match status" value="1"/>
</dbReference>
<dbReference type="PRINTS" id="PR01034">
    <property type="entry name" value="RIBOSOMALS12"/>
</dbReference>
<dbReference type="SUPFAM" id="SSF50249">
    <property type="entry name" value="Nucleic acid-binding proteins"/>
    <property type="match status" value="1"/>
</dbReference>
<dbReference type="PROSITE" id="PS00055">
    <property type="entry name" value="RIBOSOMAL_S12"/>
    <property type="match status" value="1"/>
</dbReference>
<organism>
    <name type="scientific">Pseudomonas fluorescens (strain ATCC BAA-477 / NRRL B-23932 / Pf-5)</name>
    <dbReference type="NCBI Taxonomy" id="220664"/>
    <lineage>
        <taxon>Bacteria</taxon>
        <taxon>Pseudomonadati</taxon>
        <taxon>Pseudomonadota</taxon>
        <taxon>Gammaproteobacteria</taxon>
        <taxon>Pseudomonadales</taxon>
        <taxon>Pseudomonadaceae</taxon>
        <taxon>Pseudomonas</taxon>
    </lineage>
</organism>